<name>G6PI_DESOH</name>
<proteinExistence type="inferred from homology"/>
<reference key="1">
    <citation type="submission" date="2007-10" db="EMBL/GenBank/DDBJ databases">
        <title>Complete sequence of Desulfococcus oleovorans Hxd3.</title>
        <authorList>
            <consortium name="US DOE Joint Genome Institute"/>
            <person name="Copeland A."/>
            <person name="Lucas S."/>
            <person name="Lapidus A."/>
            <person name="Barry K."/>
            <person name="Glavina del Rio T."/>
            <person name="Dalin E."/>
            <person name="Tice H."/>
            <person name="Pitluck S."/>
            <person name="Kiss H."/>
            <person name="Brettin T."/>
            <person name="Bruce D."/>
            <person name="Detter J.C."/>
            <person name="Han C."/>
            <person name="Schmutz J."/>
            <person name="Larimer F."/>
            <person name="Land M."/>
            <person name="Hauser L."/>
            <person name="Kyrpides N."/>
            <person name="Kim E."/>
            <person name="Wawrik B."/>
            <person name="Richardson P."/>
        </authorList>
    </citation>
    <scope>NUCLEOTIDE SEQUENCE [LARGE SCALE GENOMIC DNA]</scope>
    <source>
        <strain>DSM 6200 / JCM 39069 / Hxd3</strain>
    </source>
</reference>
<organism>
    <name type="scientific">Desulfosudis oleivorans (strain DSM 6200 / JCM 39069 / Hxd3)</name>
    <name type="common">Desulfococcus oleovorans</name>
    <dbReference type="NCBI Taxonomy" id="96561"/>
    <lineage>
        <taxon>Bacteria</taxon>
        <taxon>Pseudomonadati</taxon>
        <taxon>Thermodesulfobacteriota</taxon>
        <taxon>Desulfobacteria</taxon>
        <taxon>Desulfobacterales</taxon>
        <taxon>Desulfosudaceae</taxon>
        <taxon>Desulfosudis</taxon>
    </lineage>
</organism>
<comment type="function">
    <text evidence="1">Catalyzes the reversible isomerization of glucose-6-phosphate to fructose-6-phosphate.</text>
</comment>
<comment type="catalytic activity">
    <reaction evidence="1">
        <text>alpha-D-glucose 6-phosphate = beta-D-fructose 6-phosphate</text>
        <dbReference type="Rhea" id="RHEA:11816"/>
        <dbReference type="ChEBI" id="CHEBI:57634"/>
        <dbReference type="ChEBI" id="CHEBI:58225"/>
        <dbReference type="EC" id="5.3.1.9"/>
    </reaction>
</comment>
<comment type="pathway">
    <text evidence="1">Carbohydrate biosynthesis; gluconeogenesis.</text>
</comment>
<comment type="pathway">
    <text evidence="1">Carbohydrate degradation; glycolysis; D-glyceraldehyde 3-phosphate and glycerone phosphate from D-glucose: step 2/4.</text>
</comment>
<comment type="subcellular location">
    <subcellularLocation>
        <location evidence="1">Cytoplasm</location>
    </subcellularLocation>
</comment>
<comment type="similarity">
    <text evidence="1">Belongs to the GPI family.</text>
</comment>
<gene>
    <name evidence="1" type="primary">pgi</name>
    <name type="ordered locus">Dole_1849</name>
</gene>
<accession>A8ZSB6</accession>
<evidence type="ECO:0000255" key="1">
    <source>
        <dbReference type="HAMAP-Rule" id="MF_00473"/>
    </source>
</evidence>
<sequence>MRTSRLTDLDLWKQLKAHAEKMALPENHLKHLTMAPERLAEFSIQALDMVYDFSRQRVDRQAIDLLMELAWERKVTQRFQAMTTGAVVNTTENRAALHTACRDFSKAKRVVNKIDVTAEMARVRKEIREFSEAVHAGQITGATGKPFAHVVVVGIGGSYLGTEFVARALAAYADKGICLHFLANVDIHNFGEIAEAIDPETTLWVIVSKSFTTAETMANANQAAAFMKEQGLDPARHFVSVTSKGSPGDQTGQDAPFPVLRSFHMFDFIGGRYSVTSAVGGVPLSLYLGYDRFETFLKGAHQMDVHAATAPPTTNMPLTAALLGIWNNNFLEYPAQAIIPYASPLARLAPHVQQLYMESNGKSVTAEGKPLGVRSGVIIFGEPGTNAQHSFFQLAHQGAPFPIDFIGVIKPQYDAFQALSRGVTNHQELWANLISQPRALAEGKESEDGHRSFSGNRPSSTILLEDLSPASVGKLLAFYEARTVYEAFVWGINPFDQYGVELGKKLASEIRSQMAAKNRDAGHTFENVDSISRFYLEKLMGKGNDE</sequence>
<keyword id="KW-0963">Cytoplasm</keyword>
<keyword id="KW-0312">Gluconeogenesis</keyword>
<keyword id="KW-0324">Glycolysis</keyword>
<keyword id="KW-0413">Isomerase</keyword>
<keyword id="KW-1185">Reference proteome</keyword>
<protein>
    <recommendedName>
        <fullName evidence="1">Glucose-6-phosphate isomerase</fullName>
        <shortName evidence="1">GPI</shortName>
        <ecNumber evidence="1">5.3.1.9</ecNumber>
    </recommendedName>
    <alternativeName>
        <fullName evidence="1">Phosphoglucose isomerase</fullName>
        <shortName evidence="1">PGI</shortName>
    </alternativeName>
    <alternativeName>
        <fullName evidence="1">Phosphohexose isomerase</fullName>
        <shortName evidence="1">PHI</shortName>
    </alternativeName>
</protein>
<dbReference type="EC" id="5.3.1.9" evidence="1"/>
<dbReference type="EMBL" id="CP000859">
    <property type="protein sequence ID" value="ABW67653.1"/>
    <property type="molecule type" value="Genomic_DNA"/>
</dbReference>
<dbReference type="RefSeq" id="WP_012175266.1">
    <property type="nucleotide sequence ID" value="NC_009943.1"/>
</dbReference>
<dbReference type="SMR" id="A8ZSB6"/>
<dbReference type="STRING" id="96561.Dole_1849"/>
<dbReference type="KEGG" id="dol:Dole_1849"/>
<dbReference type="eggNOG" id="COG0166">
    <property type="taxonomic scope" value="Bacteria"/>
</dbReference>
<dbReference type="HOGENOM" id="CLU_017947_3_1_7"/>
<dbReference type="OrthoDB" id="140919at2"/>
<dbReference type="UniPathway" id="UPA00109">
    <property type="reaction ID" value="UER00181"/>
</dbReference>
<dbReference type="UniPathway" id="UPA00138"/>
<dbReference type="Proteomes" id="UP000008561">
    <property type="component" value="Chromosome"/>
</dbReference>
<dbReference type="GO" id="GO:0005829">
    <property type="term" value="C:cytosol"/>
    <property type="evidence" value="ECO:0007669"/>
    <property type="project" value="TreeGrafter"/>
</dbReference>
<dbReference type="GO" id="GO:0097367">
    <property type="term" value="F:carbohydrate derivative binding"/>
    <property type="evidence" value="ECO:0007669"/>
    <property type="project" value="InterPro"/>
</dbReference>
<dbReference type="GO" id="GO:0004347">
    <property type="term" value="F:glucose-6-phosphate isomerase activity"/>
    <property type="evidence" value="ECO:0007669"/>
    <property type="project" value="UniProtKB-UniRule"/>
</dbReference>
<dbReference type="GO" id="GO:0048029">
    <property type="term" value="F:monosaccharide binding"/>
    <property type="evidence" value="ECO:0007669"/>
    <property type="project" value="TreeGrafter"/>
</dbReference>
<dbReference type="GO" id="GO:0006094">
    <property type="term" value="P:gluconeogenesis"/>
    <property type="evidence" value="ECO:0007669"/>
    <property type="project" value="UniProtKB-UniRule"/>
</dbReference>
<dbReference type="GO" id="GO:0051156">
    <property type="term" value="P:glucose 6-phosphate metabolic process"/>
    <property type="evidence" value="ECO:0007669"/>
    <property type="project" value="TreeGrafter"/>
</dbReference>
<dbReference type="GO" id="GO:0006096">
    <property type="term" value="P:glycolytic process"/>
    <property type="evidence" value="ECO:0007669"/>
    <property type="project" value="UniProtKB-UniRule"/>
</dbReference>
<dbReference type="CDD" id="cd05015">
    <property type="entry name" value="SIS_PGI_1"/>
    <property type="match status" value="1"/>
</dbReference>
<dbReference type="CDD" id="cd05016">
    <property type="entry name" value="SIS_PGI_2"/>
    <property type="match status" value="1"/>
</dbReference>
<dbReference type="Gene3D" id="1.10.1390.10">
    <property type="match status" value="1"/>
</dbReference>
<dbReference type="Gene3D" id="3.40.50.10490">
    <property type="entry name" value="Glucose-6-phosphate isomerase like protein, domain 1"/>
    <property type="match status" value="2"/>
</dbReference>
<dbReference type="HAMAP" id="MF_00473">
    <property type="entry name" value="G6P_isomerase"/>
    <property type="match status" value="1"/>
</dbReference>
<dbReference type="InterPro" id="IPR001672">
    <property type="entry name" value="G6P_Isomerase"/>
</dbReference>
<dbReference type="InterPro" id="IPR023096">
    <property type="entry name" value="G6P_Isomerase_C"/>
</dbReference>
<dbReference type="InterPro" id="IPR018189">
    <property type="entry name" value="Phosphoglucose_isomerase_CS"/>
</dbReference>
<dbReference type="InterPro" id="IPR046348">
    <property type="entry name" value="SIS_dom_sf"/>
</dbReference>
<dbReference type="InterPro" id="IPR035476">
    <property type="entry name" value="SIS_PGI_1"/>
</dbReference>
<dbReference type="InterPro" id="IPR035482">
    <property type="entry name" value="SIS_PGI_2"/>
</dbReference>
<dbReference type="NCBIfam" id="NF001211">
    <property type="entry name" value="PRK00179.1"/>
    <property type="match status" value="1"/>
</dbReference>
<dbReference type="PANTHER" id="PTHR11469">
    <property type="entry name" value="GLUCOSE-6-PHOSPHATE ISOMERASE"/>
    <property type="match status" value="1"/>
</dbReference>
<dbReference type="PANTHER" id="PTHR11469:SF1">
    <property type="entry name" value="GLUCOSE-6-PHOSPHATE ISOMERASE"/>
    <property type="match status" value="1"/>
</dbReference>
<dbReference type="Pfam" id="PF00342">
    <property type="entry name" value="PGI"/>
    <property type="match status" value="1"/>
</dbReference>
<dbReference type="PRINTS" id="PR00662">
    <property type="entry name" value="G6PISOMERASE"/>
</dbReference>
<dbReference type="SUPFAM" id="SSF53697">
    <property type="entry name" value="SIS domain"/>
    <property type="match status" value="1"/>
</dbReference>
<dbReference type="PROSITE" id="PS00765">
    <property type="entry name" value="P_GLUCOSE_ISOMERASE_1"/>
    <property type="match status" value="1"/>
</dbReference>
<dbReference type="PROSITE" id="PS00174">
    <property type="entry name" value="P_GLUCOSE_ISOMERASE_2"/>
    <property type="match status" value="1"/>
</dbReference>
<dbReference type="PROSITE" id="PS51463">
    <property type="entry name" value="P_GLUCOSE_ISOMERASE_3"/>
    <property type="match status" value="1"/>
</dbReference>
<feature type="chain" id="PRO_1000125715" description="Glucose-6-phosphate isomerase">
    <location>
        <begin position="1"/>
        <end position="546"/>
    </location>
</feature>
<feature type="active site" description="Proton donor" evidence="1">
    <location>
        <position position="358"/>
    </location>
</feature>
<feature type="active site" evidence="1">
    <location>
        <position position="389"/>
    </location>
</feature>
<feature type="active site" evidence="1">
    <location>
        <position position="504"/>
    </location>
</feature>